<proteinExistence type="predicted"/>
<protein>
    <recommendedName>
        <fullName>Uncharacterized protein C17D1.07c</fullName>
    </recommendedName>
</protein>
<dbReference type="EMBL" id="CU329671">
    <property type="protein sequence ID" value="CAA20431.2"/>
    <property type="molecule type" value="Genomic_DNA"/>
</dbReference>
<dbReference type="PIR" id="T39710">
    <property type="entry name" value="S67385"/>
</dbReference>
<dbReference type="SMR" id="Q10201"/>
<dbReference type="BioGRID" id="276711">
    <property type="interactions" value="2"/>
</dbReference>
<dbReference type="STRING" id="284812.Q10201"/>
<dbReference type="PaxDb" id="4896-SPBC17D1.07c.1"/>
<dbReference type="EnsemblFungi" id="SPBC17D1.07c.1">
    <property type="protein sequence ID" value="SPBC17D1.07c.1:pep"/>
    <property type="gene ID" value="SPBC17D1.07c"/>
</dbReference>
<dbReference type="KEGG" id="spo:2540178"/>
<dbReference type="PomBase" id="SPBC17D1.07c"/>
<dbReference type="VEuPathDB" id="FungiDB:SPBC17D1.07c"/>
<dbReference type="eggNOG" id="KOG2128">
    <property type="taxonomic scope" value="Eukaryota"/>
</dbReference>
<dbReference type="HOGENOM" id="CLU_327639_0_0_1"/>
<dbReference type="InParanoid" id="Q10201"/>
<dbReference type="OMA" id="INTRDIM"/>
<dbReference type="Reactome" id="R-SPO-5626467">
    <property type="pathway name" value="RHO GTPases activate IQGAPs"/>
</dbReference>
<dbReference type="Reactome" id="R-SPO-6798695">
    <property type="pathway name" value="Neutrophil degranulation"/>
</dbReference>
<dbReference type="Reactome" id="R-SPO-8980692">
    <property type="pathway name" value="RHOA GTPase cycle"/>
</dbReference>
<dbReference type="Reactome" id="R-SPO-9013026">
    <property type="pathway name" value="RHOB GTPase cycle"/>
</dbReference>
<dbReference type="Reactome" id="R-SPO-9013106">
    <property type="pathway name" value="RHOC GTPase cycle"/>
</dbReference>
<dbReference type="Reactome" id="R-SPO-9013406">
    <property type="pathway name" value="RHOQ GTPase cycle"/>
</dbReference>
<dbReference type="Reactome" id="R-SPO-9013420">
    <property type="pathway name" value="RHOU GTPase cycle"/>
</dbReference>
<dbReference type="Reactome" id="R-SPO-9013424">
    <property type="pathway name" value="RHOV GTPase cycle"/>
</dbReference>
<dbReference type="PRO" id="PR:Q10201"/>
<dbReference type="Proteomes" id="UP000002485">
    <property type="component" value="Chromosome II"/>
</dbReference>
<dbReference type="GO" id="GO:0005634">
    <property type="term" value="C:nucleus"/>
    <property type="evidence" value="ECO:0000314"/>
    <property type="project" value="PomBase"/>
</dbReference>
<dbReference type="GO" id="GO:0005628">
    <property type="term" value="C:prospore membrane"/>
    <property type="evidence" value="ECO:0000314"/>
    <property type="project" value="PomBase"/>
</dbReference>
<dbReference type="GO" id="GO:0070057">
    <property type="term" value="C:prospore membrane spindle pole body attachment site"/>
    <property type="evidence" value="ECO:0000314"/>
    <property type="project" value="PomBase"/>
</dbReference>
<dbReference type="GO" id="GO:0051015">
    <property type="term" value="F:actin filament binding"/>
    <property type="evidence" value="ECO:0000318"/>
    <property type="project" value="GO_Central"/>
</dbReference>
<dbReference type="GO" id="GO:0005509">
    <property type="term" value="F:calcium ion binding"/>
    <property type="evidence" value="ECO:0000255"/>
    <property type="project" value="PomBase"/>
</dbReference>
<dbReference type="GO" id="GO:0005516">
    <property type="term" value="F:calmodulin binding"/>
    <property type="evidence" value="ECO:0000318"/>
    <property type="project" value="GO_Central"/>
</dbReference>
<dbReference type="GO" id="GO:0005096">
    <property type="term" value="F:GTPase activator activity"/>
    <property type="evidence" value="ECO:0000318"/>
    <property type="project" value="GO_Central"/>
</dbReference>
<dbReference type="GO" id="GO:0032120">
    <property type="term" value="P:ascospore-type prospore membrane formation"/>
    <property type="evidence" value="ECO:0000315"/>
    <property type="project" value="PomBase"/>
</dbReference>
<dbReference type="CDD" id="cd21206">
    <property type="entry name" value="CH_IQGAP"/>
    <property type="match status" value="1"/>
</dbReference>
<dbReference type="Gene3D" id="1.10.418.10">
    <property type="entry name" value="Calponin-like domain"/>
    <property type="match status" value="1"/>
</dbReference>
<dbReference type="InterPro" id="IPR001715">
    <property type="entry name" value="CH_dom"/>
</dbReference>
<dbReference type="InterPro" id="IPR036872">
    <property type="entry name" value="CH_dom_sf"/>
</dbReference>
<dbReference type="PANTHER" id="PTHR14149:SF14">
    <property type="entry name" value="CALPONIN-HOMOLOGY (CH) DOMAIN-CONTAINING PROTEIN"/>
    <property type="match status" value="1"/>
</dbReference>
<dbReference type="PANTHER" id="PTHR14149">
    <property type="entry name" value="RAS GTPASE-ACTIVATING PROTEIN WITH IQ MOTIF"/>
    <property type="match status" value="1"/>
</dbReference>
<dbReference type="Pfam" id="PF00307">
    <property type="entry name" value="CH"/>
    <property type="match status" value="1"/>
</dbReference>
<dbReference type="SMART" id="SM00033">
    <property type="entry name" value="CH"/>
    <property type="match status" value="1"/>
</dbReference>
<dbReference type="SUPFAM" id="SSF47576">
    <property type="entry name" value="Calponin-homology domain, CH-domain"/>
    <property type="match status" value="1"/>
</dbReference>
<dbReference type="PROSITE" id="PS50021">
    <property type="entry name" value="CH"/>
    <property type="match status" value="1"/>
</dbReference>
<accession>Q10201</accession>
<sequence length="949" mass="111172">MKMLQNKGPLQELTLNAMAPNGIFQDEPMIQKFENHYVFKKDMKSKRNKEVKNQMNDWLAYGYLCSVHEAKKWLEEETNNEYQNLDDFVDALVNGKVLCQLAFKYYPKLASNWKPRYQISERNTVYLNAFFHFLDFIGMFTPFRFETKDLVRRFNIPKVIYCLHALSYLLDFLEVTRHVPSLYGKLRIKKSQLNTATKEISLLKKAKKFPNFPKLKNFFCSYSHRHETATSNKQVSCFREVPAWIKQCQSQCRGFLTRKCVSIEKLRRDDMSERLGWLPKLETKLSSISDEERLILLKESHQIYRKMVSLHLELLHLPQLEMSLDFCGFSSDDSSIAISSQLVPPILNNLIFKLEESPQIWILIISRFSSDGIDKIDVQNFILLILKFFGFAISASDRRSFLNLIMSCVMVSIQQSSAEVGHSTSDSLISWASRLFTKGFCLQLQSFFEKHLGNVVDKFFLEHLCETTIESDAMRVVTEMLVSCYENRERIPNELPMVLKQIYYSRSESFKPSAIKEFIEYFLCDQLMNCLSVYYSKYFEGKDSKKFTLVKHFMNSLFGRVKLNEQTEIIWHTRNYRIVEALVRKLIHLSTPKIIPVYGGRTLSCTHKDIFDLQNILRYCDERGDFSSFPSFKKLISLLGSPKLFKKHENQILLLESKNEVIHSSLPCSKSSLYQLSLSLCIPLIEGHLRNSLEEILFGVPTELENQKFMSVLRNDKLIKSIHPGSLSGISNSFVNSKHPIEQWQSRLRKILHLFSGRNEDIASLQCVLQFGSSERIHLEDIQNSHRYLCSLKKNNSQKDIHRNPLLSHVFDTNTKSFDTLKTLNYKHAILKKSMGELYKMEMIHECPRQLFGQILVVYLNRERTLLNFYLIENSKTIDEATLQLTDLIQAIKTGIYYLRMFNLPFHVKQLYTWLAPISKYDSEISFNQKKERRKTFLSFERRGKNRKF</sequence>
<comment type="subcellular location">
    <subcellularLocation>
        <location evidence="2">Nucleus</location>
    </subcellularLocation>
</comment>
<keyword id="KW-0539">Nucleus</keyword>
<keyword id="KW-1185">Reference proteome</keyword>
<gene>
    <name type="ORF">SPBC17D1.07c</name>
</gene>
<feature type="chain" id="PRO_0000116531" description="Uncharacterized protein C17D1.07c">
    <location>
        <begin position="1"/>
        <end position="949"/>
    </location>
</feature>
<feature type="domain" description="Calponin-homology (CH)" evidence="1">
    <location>
        <begin position="64"/>
        <end position="170"/>
    </location>
</feature>
<name>YBX7_SCHPO</name>
<organism>
    <name type="scientific">Schizosaccharomyces pombe (strain 972 / ATCC 24843)</name>
    <name type="common">Fission yeast</name>
    <dbReference type="NCBI Taxonomy" id="284812"/>
    <lineage>
        <taxon>Eukaryota</taxon>
        <taxon>Fungi</taxon>
        <taxon>Dikarya</taxon>
        <taxon>Ascomycota</taxon>
        <taxon>Taphrinomycotina</taxon>
        <taxon>Schizosaccharomycetes</taxon>
        <taxon>Schizosaccharomycetales</taxon>
        <taxon>Schizosaccharomycetaceae</taxon>
        <taxon>Schizosaccharomyces</taxon>
    </lineage>
</organism>
<reference key="1">
    <citation type="journal article" date="2002" name="Nature">
        <title>The genome sequence of Schizosaccharomyces pombe.</title>
        <authorList>
            <person name="Wood V."/>
            <person name="Gwilliam R."/>
            <person name="Rajandream M.A."/>
            <person name="Lyne M.H."/>
            <person name="Lyne R."/>
            <person name="Stewart A."/>
            <person name="Sgouros J.G."/>
            <person name="Peat N."/>
            <person name="Hayles J."/>
            <person name="Baker S.G."/>
            <person name="Basham D."/>
            <person name="Bowman S."/>
            <person name="Brooks K."/>
            <person name="Brown D."/>
            <person name="Brown S."/>
            <person name="Chillingworth T."/>
            <person name="Churcher C.M."/>
            <person name="Collins M."/>
            <person name="Connor R."/>
            <person name="Cronin A."/>
            <person name="Davis P."/>
            <person name="Feltwell T."/>
            <person name="Fraser A."/>
            <person name="Gentles S."/>
            <person name="Goble A."/>
            <person name="Hamlin N."/>
            <person name="Harris D.E."/>
            <person name="Hidalgo J."/>
            <person name="Hodgson G."/>
            <person name="Holroyd S."/>
            <person name="Hornsby T."/>
            <person name="Howarth S."/>
            <person name="Huckle E.J."/>
            <person name="Hunt S."/>
            <person name="Jagels K."/>
            <person name="James K.D."/>
            <person name="Jones L."/>
            <person name="Jones M."/>
            <person name="Leather S."/>
            <person name="McDonald S."/>
            <person name="McLean J."/>
            <person name="Mooney P."/>
            <person name="Moule S."/>
            <person name="Mungall K.L."/>
            <person name="Murphy L.D."/>
            <person name="Niblett D."/>
            <person name="Odell C."/>
            <person name="Oliver K."/>
            <person name="O'Neil S."/>
            <person name="Pearson D."/>
            <person name="Quail M.A."/>
            <person name="Rabbinowitsch E."/>
            <person name="Rutherford K.M."/>
            <person name="Rutter S."/>
            <person name="Saunders D."/>
            <person name="Seeger K."/>
            <person name="Sharp S."/>
            <person name="Skelton J."/>
            <person name="Simmonds M.N."/>
            <person name="Squares R."/>
            <person name="Squares S."/>
            <person name="Stevens K."/>
            <person name="Taylor K."/>
            <person name="Taylor R.G."/>
            <person name="Tivey A."/>
            <person name="Walsh S.V."/>
            <person name="Warren T."/>
            <person name="Whitehead S."/>
            <person name="Woodward J.R."/>
            <person name="Volckaert G."/>
            <person name="Aert R."/>
            <person name="Robben J."/>
            <person name="Grymonprez B."/>
            <person name="Weltjens I."/>
            <person name="Vanstreels E."/>
            <person name="Rieger M."/>
            <person name="Schaefer M."/>
            <person name="Mueller-Auer S."/>
            <person name="Gabel C."/>
            <person name="Fuchs M."/>
            <person name="Duesterhoeft A."/>
            <person name="Fritzc C."/>
            <person name="Holzer E."/>
            <person name="Moestl D."/>
            <person name="Hilbert H."/>
            <person name="Borzym K."/>
            <person name="Langer I."/>
            <person name="Beck A."/>
            <person name="Lehrach H."/>
            <person name="Reinhardt R."/>
            <person name="Pohl T.M."/>
            <person name="Eger P."/>
            <person name="Zimmermann W."/>
            <person name="Wedler H."/>
            <person name="Wambutt R."/>
            <person name="Purnelle B."/>
            <person name="Goffeau A."/>
            <person name="Cadieu E."/>
            <person name="Dreano S."/>
            <person name="Gloux S."/>
            <person name="Lelaure V."/>
            <person name="Mottier S."/>
            <person name="Galibert F."/>
            <person name="Aves S.J."/>
            <person name="Xiang Z."/>
            <person name="Hunt C."/>
            <person name="Moore K."/>
            <person name="Hurst S.M."/>
            <person name="Lucas M."/>
            <person name="Rochet M."/>
            <person name="Gaillardin C."/>
            <person name="Tallada V.A."/>
            <person name="Garzon A."/>
            <person name="Thode G."/>
            <person name="Daga R.R."/>
            <person name="Cruzado L."/>
            <person name="Jimenez J."/>
            <person name="Sanchez M."/>
            <person name="del Rey F."/>
            <person name="Benito J."/>
            <person name="Dominguez A."/>
            <person name="Revuelta J.L."/>
            <person name="Moreno S."/>
            <person name="Armstrong J."/>
            <person name="Forsburg S.L."/>
            <person name="Cerutti L."/>
            <person name="Lowe T."/>
            <person name="McCombie W.R."/>
            <person name="Paulsen I."/>
            <person name="Potashkin J."/>
            <person name="Shpakovski G.V."/>
            <person name="Ussery D."/>
            <person name="Barrell B.G."/>
            <person name="Nurse P."/>
        </authorList>
    </citation>
    <scope>NUCLEOTIDE SEQUENCE [LARGE SCALE GENOMIC DNA]</scope>
    <source>
        <strain>972 / ATCC 24843</strain>
    </source>
</reference>
<reference key="2">
    <citation type="journal article" date="2011" name="Science">
        <title>Comparative functional genomics of the fission yeasts.</title>
        <authorList>
            <person name="Rhind N."/>
            <person name="Chen Z."/>
            <person name="Yassour M."/>
            <person name="Thompson D.A."/>
            <person name="Haas B.J."/>
            <person name="Habib N."/>
            <person name="Wapinski I."/>
            <person name="Roy S."/>
            <person name="Lin M.F."/>
            <person name="Heiman D.I."/>
            <person name="Young S.K."/>
            <person name="Furuya K."/>
            <person name="Guo Y."/>
            <person name="Pidoux A."/>
            <person name="Chen H.M."/>
            <person name="Robbertse B."/>
            <person name="Goldberg J.M."/>
            <person name="Aoki K."/>
            <person name="Bayne E.H."/>
            <person name="Berlin A.M."/>
            <person name="Desjardins C.A."/>
            <person name="Dobbs E."/>
            <person name="Dukaj L."/>
            <person name="Fan L."/>
            <person name="FitzGerald M.G."/>
            <person name="French C."/>
            <person name="Gujja S."/>
            <person name="Hansen K."/>
            <person name="Keifenheim D."/>
            <person name="Levin J.Z."/>
            <person name="Mosher R.A."/>
            <person name="Mueller C.A."/>
            <person name="Pfiffner J."/>
            <person name="Priest M."/>
            <person name="Russ C."/>
            <person name="Smialowska A."/>
            <person name="Swoboda P."/>
            <person name="Sykes S.M."/>
            <person name="Vaughn M."/>
            <person name="Vengrova S."/>
            <person name="Yoder R."/>
            <person name="Zeng Q."/>
            <person name="Allshire R."/>
            <person name="Baulcombe D."/>
            <person name="Birren B.W."/>
            <person name="Brown W."/>
            <person name="Ekwall K."/>
            <person name="Kellis M."/>
            <person name="Leatherwood J."/>
            <person name="Levin H."/>
            <person name="Margalit H."/>
            <person name="Martienssen R."/>
            <person name="Nieduszynski C.A."/>
            <person name="Spatafora J.W."/>
            <person name="Friedman N."/>
            <person name="Dalgaard J.Z."/>
            <person name="Baumann P."/>
            <person name="Niki H."/>
            <person name="Regev A."/>
            <person name="Nusbaum C."/>
        </authorList>
    </citation>
    <scope>REVISION OF GENE MODEL</scope>
</reference>
<reference key="3">
    <citation type="journal article" date="2006" name="Nat. Biotechnol.">
        <title>ORFeome cloning and global analysis of protein localization in the fission yeast Schizosaccharomyces pombe.</title>
        <authorList>
            <person name="Matsuyama A."/>
            <person name="Arai R."/>
            <person name="Yashiroda Y."/>
            <person name="Shirai A."/>
            <person name="Kamata A."/>
            <person name="Sekido S."/>
            <person name="Kobayashi Y."/>
            <person name="Hashimoto A."/>
            <person name="Hamamoto M."/>
            <person name="Hiraoka Y."/>
            <person name="Horinouchi S."/>
            <person name="Yoshida M."/>
        </authorList>
    </citation>
    <scope>SUBCELLULAR LOCATION [LARGE SCALE ANALYSIS]</scope>
</reference>
<evidence type="ECO:0000255" key="1">
    <source>
        <dbReference type="PROSITE-ProRule" id="PRU00044"/>
    </source>
</evidence>
<evidence type="ECO:0000269" key="2">
    <source>
    </source>
</evidence>